<feature type="chain" id="PRO_0000230295" description="Fructose-bisphosphate aldolase A">
    <location>
        <begin position="1"/>
        <end position="364"/>
    </location>
</feature>
<feature type="active site" description="Proton acceptor" evidence="2">
    <location>
        <position position="188"/>
    </location>
</feature>
<feature type="active site" description="Schiff-base intermediate with dihydroxyacetone-P" evidence="2">
    <location>
        <position position="230"/>
    </location>
</feature>
<feature type="binding site" evidence="2">
    <location>
        <position position="43"/>
    </location>
    <ligand>
        <name>beta-D-fructose 1,6-bisphosphate</name>
        <dbReference type="ChEBI" id="CHEBI:32966"/>
    </ligand>
</feature>
<feature type="binding site" evidence="2">
    <location>
        <begin position="272"/>
        <end position="274"/>
    </location>
    <ligand>
        <name>beta-D-fructose 1,6-bisphosphate</name>
        <dbReference type="ChEBI" id="CHEBI:32966"/>
    </ligand>
</feature>
<feature type="binding site" evidence="2">
    <location>
        <position position="301"/>
    </location>
    <ligand>
        <name>beta-D-fructose 1,6-bisphosphate</name>
        <dbReference type="ChEBI" id="CHEBI:32966"/>
    </ligand>
</feature>
<feature type="binding site" evidence="2">
    <location>
        <position position="304"/>
    </location>
    <ligand>
        <name>beta-D-fructose 1,6-bisphosphate</name>
        <dbReference type="ChEBI" id="CHEBI:32966"/>
    </ligand>
</feature>
<feature type="site" description="Necessary for preference for fructose 1,6-bisphosphate over fructose 1-phosphate">
    <location>
        <position position="364"/>
    </location>
</feature>
<feature type="modified residue" description="Phosphotyrosine" evidence="4">
    <location>
        <position position="5"/>
    </location>
</feature>
<feature type="modified residue" description="Phosphothreonine" evidence="3">
    <location>
        <position position="9"/>
    </location>
</feature>
<feature type="modified residue" description="Phosphoserine" evidence="3">
    <location>
        <position position="36"/>
    </location>
</feature>
<feature type="modified residue" description="Phosphoserine" evidence="3">
    <location>
        <position position="39"/>
    </location>
</feature>
<feature type="modified residue" description="N6-acetyllysine; alternate" evidence="3">
    <location>
        <position position="42"/>
    </location>
</feature>
<feature type="modified residue" description="Phosphoserine" evidence="3">
    <location>
        <position position="46"/>
    </location>
</feature>
<feature type="modified residue" description="N6-(2-hydroxyisobutyryl)lysine" evidence="3">
    <location>
        <position position="99"/>
    </location>
</feature>
<feature type="modified residue" description="N6-acetyllysine" evidence="3">
    <location>
        <position position="108"/>
    </location>
</feature>
<feature type="modified residue" description="N6-acetyllysine; alternate" evidence="5">
    <location>
        <position position="111"/>
    </location>
</feature>
<feature type="modified residue" description="N6-malonyllysine; alternate" evidence="1">
    <location>
        <position position="111"/>
    </location>
</feature>
<feature type="modified residue" description="Phosphoserine" evidence="4">
    <location>
        <position position="132"/>
    </location>
</feature>
<feature type="modified residue" description="N6-(2-hydroxyisobutyryl)lysine" evidence="3">
    <location>
        <position position="147"/>
    </location>
</feature>
<feature type="modified residue" description="Phosphoserine" evidence="3">
    <location>
        <position position="272"/>
    </location>
</feature>
<feature type="modified residue" description="N6-malonyllysine" evidence="1">
    <location>
        <position position="312"/>
    </location>
</feature>
<feature type="modified residue" description="N6-acetyllysine" evidence="3">
    <location>
        <position position="330"/>
    </location>
</feature>
<feature type="cross-link" description="Glycyl lysine isopeptide (Lys-Gly) (interchain with G-Cter in SUMO1); alternate" evidence="3">
    <location>
        <position position="42"/>
    </location>
</feature>
<feature type="cross-link" description="Glycyl lysine isopeptide (Lys-Gly) (interchain with G-Cter in SUMO2); alternate" evidence="3">
    <location>
        <position position="42"/>
    </location>
</feature>
<proteinExistence type="evidence at transcript level"/>
<organism>
    <name type="scientific">Pongo abelii</name>
    <name type="common">Sumatran orangutan</name>
    <name type="synonym">Pongo pygmaeus abelii</name>
    <dbReference type="NCBI Taxonomy" id="9601"/>
    <lineage>
        <taxon>Eukaryota</taxon>
        <taxon>Metazoa</taxon>
        <taxon>Chordata</taxon>
        <taxon>Craniata</taxon>
        <taxon>Vertebrata</taxon>
        <taxon>Euteleostomi</taxon>
        <taxon>Mammalia</taxon>
        <taxon>Eutheria</taxon>
        <taxon>Euarchontoglires</taxon>
        <taxon>Primates</taxon>
        <taxon>Haplorrhini</taxon>
        <taxon>Catarrhini</taxon>
        <taxon>Hominidae</taxon>
        <taxon>Pongo</taxon>
    </lineage>
</organism>
<evidence type="ECO:0000250" key="1"/>
<evidence type="ECO:0000250" key="2">
    <source>
        <dbReference type="UniProtKB" id="P00883"/>
    </source>
</evidence>
<evidence type="ECO:0000250" key="3">
    <source>
        <dbReference type="UniProtKB" id="P04075"/>
    </source>
</evidence>
<evidence type="ECO:0000250" key="4">
    <source>
        <dbReference type="UniProtKB" id="P05065"/>
    </source>
</evidence>
<evidence type="ECO:0000250" key="5">
    <source>
        <dbReference type="UniProtKB" id="P09972"/>
    </source>
</evidence>
<evidence type="ECO:0000305" key="6"/>
<gene>
    <name type="primary">ALDOA</name>
</gene>
<accession>Q5NVR5</accession>
<keyword id="KW-0007">Acetylation</keyword>
<keyword id="KW-0963">Cytoplasm</keyword>
<keyword id="KW-0324">Glycolysis</keyword>
<keyword id="KW-0379">Hydroxylation</keyword>
<keyword id="KW-1017">Isopeptide bond</keyword>
<keyword id="KW-0456">Lyase</keyword>
<keyword id="KW-0597">Phosphoprotein</keyword>
<keyword id="KW-1185">Reference proteome</keyword>
<keyword id="KW-0704">Schiff base</keyword>
<keyword id="KW-0832">Ubl conjugation</keyword>
<dbReference type="EC" id="4.1.2.13" evidence="3"/>
<dbReference type="EMBL" id="CR925940">
    <property type="protein sequence ID" value="CAI29598.1"/>
    <property type="molecule type" value="mRNA"/>
</dbReference>
<dbReference type="RefSeq" id="NP_001127068.1">
    <property type="nucleotide sequence ID" value="NM_001133596.2"/>
</dbReference>
<dbReference type="SMR" id="Q5NVR5"/>
<dbReference type="FunCoup" id="Q5NVR5">
    <property type="interactions" value="1477"/>
</dbReference>
<dbReference type="STRING" id="9601.ENSPPYP00000024596"/>
<dbReference type="GeneID" id="100174098"/>
<dbReference type="KEGG" id="pon:100174098"/>
<dbReference type="CTD" id="226"/>
<dbReference type="eggNOG" id="KOG1557">
    <property type="taxonomic scope" value="Eukaryota"/>
</dbReference>
<dbReference type="InParanoid" id="Q5NVR5"/>
<dbReference type="OrthoDB" id="36455at2759"/>
<dbReference type="UniPathway" id="UPA00109">
    <property type="reaction ID" value="UER00183"/>
</dbReference>
<dbReference type="Proteomes" id="UP000001595">
    <property type="component" value="Unplaced"/>
</dbReference>
<dbReference type="GO" id="GO:0031674">
    <property type="term" value="C:I band"/>
    <property type="evidence" value="ECO:0007669"/>
    <property type="project" value="UniProtKB-SubCell"/>
</dbReference>
<dbReference type="GO" id="GO:0031430">
    <property type="term" value="C:M band"/>
    <property type="evidence" value="ECO:0007669"/>
    <property type="project" value="UniProtKB-SubCell"/>
</dbReference>
<dbReference type="GO" id="GO:0004332">
    <property type="term" value="F:fructose-bisphosphate aldolase activity"/>
    <property type="evidence" value="ECO:0000250"/>
    <property type="project" value="UniProtKB"/>
</dbReference>
<dbReference type="GO" id="GO:0006096">
    <property type="term" value="P:glycolytic process"/>
    <property type="evidence" value="ECO:0000250"/>
    <property type="project" value="UniProtKB"/>
</dbReference>
<dbReference type="GO" id="GO:0051289">
    <property type="term" value="P:protein homotetramerization"/>
    <property type="evidence" value="ECO:0000250"/>
    <property type="project" value="UniProtKB"/>
</dbReference>
<dbReference type="CDD" id="cd00948">
    <property type="entry name" value="FBP_aldolase_I_a"/>
    <property type="match status" value="1"/>
</dbReference>
<dbReference type="FunFam" id="3.20.20.70:FF:000021">
    <property type="entry name" value="Fructose-bisphosphate aldolase"/>
    <property type="match status" value="1"/>
</dbReference>
<dbReference type="Gene3D" id="3.20.20.70">
    <property type="entry name" value="Aldolase class I"/>
    <property type="match status" value="1"/>
</dbReference>
<dbReference type="InterPro" id="IPR029768">
    <property type="entry name" value="Aldolase_I_AS"/>
</dbReference>
<dbReference type="InterPro" id="IPR013785">
    <property type="entry name" value="Aldolase_TIM"/>
</dbReference>
<dbReference type="InterPro" id="IPR000741">
    <property type="entry name" value="FBA_I"/>
</dbReference>
<dbReference type="NCBIfam" id="NF033379">
    <property type="entry name" value="FrucBisAld_I"/>
    <property type="match status" value="1"/>
</dbReference>
<dbReference type="PANTHER" id="PTHR11627">
    <property type="entry name" value="FRUCTOSE-BISPHOSPHATE ALDOLASE"/>
    <property type="match status" value="1"/>
</dbReference>
<dbReference type="Pfam" id="PF00274">
    <property type="entry name" value="Glycolytic"/>
    <property type="match status" value="1"/>
</dbReference>
<dbReference type="SUPFAM" id="SSF51569">
    <property type="entry name" value="Aldolase"/>
    <property type="match status" value="1"/>
</dbReference>
<dbReference type="PROSITE" id="PS00158">
    <property type="entry name" value="ALDOLASE_CLASS_I"/>
    <property type="match status" value="1"/>
</dbReference>
<protein>
    <recommendedName>
        <fullName>Fructose-bisphosphate aldolase A</fullName>
        <ecNumber evidence="3">4.1.2.13</ecNumber>
    </recommendedName>
    <alternativeName>
        <fullName>Muscle-type aldolase</fullName>
    </alternativeName>
</protein>
<reference key="1">
    <citation type="submission" date="2004-11" db="EMBL/GenBank/DDBJ databases">
        <authorList>
            <consortium name="The German cDNA consortium"/>
        </authorList>
    </citation>
    <scope>NUCLEOTIDE SEQUENCE [LARGE SCALE MRNA]</scope>
    <source>
        <tissue>Liver</tissue>
    </source>
</reference>
<name>ALDOA_PONAB</name>
<sequence length="364" mass="39448">MPYQYPALTPEQKKELSDIAHRIVAPGKGILAADESTGSIAKRLQSIGTENTEENRRFYRQLLLTADDRVNPCIGGVILFHETLYQKADDGRPFPQVIKSKGGVVGIKVDKGVVPLAGTNGETTTQGLDGLSERCAQYKKDGADFAKWRCVLKIGEHTPSALAIMENANVLARYASICQQNGIVPIVEPEILPDGDHDLKRCQYVTEKVLAAVYKALSDHHIYLEGTLLKPNMVTPGHACTQKFSHEEIVMATVTALRRTVPPAVTGITFLSGGQSEEEASINLNAINKCPLLKPWALTFSYGRALQASALKAWGGKKENLKAAQEEYVKRALANSLACQGKYTPSGQAGAAASESLFVSNHAY</sequence>
<comment type="function">
    <text evidence="1 3">Catalyzes the reversible conversion of beta-D-fructose 1,6-bisphosphate (FBP) into two triose phosphate and plays a key role in glycolysis and gluconeogenesis (By similarity). In addition, may also function as scaffolding protein (By similarity).</text>
</comment>
<comment type="catalytic activity">
    <reaction evidence="3">
        <text>beta-D-fructose 1,6-bisphosphate = D-glyceraldehyde 3-phosphate + dihydroxyacetone phosphate</text>
        <dbReference type="Rhea" id="RHEA:14729"/>
        <dbReference type="ChEBI" id="CHEBI:32966"/>
        <dbReference type="ChEBI" id="CHEBI:57642"/>
        <dbReference type="ChEBI" id="CHEBI:59776"/>
        <dbReference type="EC" id="4.1.2.13"/>
    </reaction>
    <physiologicalReaction direction="left-to-right" evidence="3">
        <dbReference type="Rhea" id="RHEA:14730"/>
    </physiologicalReaction>
</comment>
<comment type="pathway">
    <text>Carbohydrate degradation; glycolysis; D-glyceraldehyde 3-phosphate and glycerone phosphate from D-glucose: step 4/4.</text>
</comment>
<comment type="subunit">
    <text evidence="1">Homotetramer. Interacts with SNX9 and WAS. Interacts with FBP2; the interaction blocks FBP2 inhibition by physiological concentrations of AMP and reduces inhibition by Ca(2+) (By similarity).</text>
</comment>
<comment type="subcellular location">
    <subcellularLocation>
        <location evidence="2">Cytoplasm</location>
        <location evidence="2">Myofibril</location>
        <location evidence="2">Sarcomere</location>
        <location evidence="2">I band</location>
    </subcellularLocation>
    <subcellularLocation>
        <location evidence="2">Cytoplasm</location>
        <location evidence="2">Myofibril</location>
        <location evidence="2">Sarcomere</location>
        <location evidence="2">M line</location>
    </subcellularLocation>
    <text evidence="2">In skeletal muscle, accumulates around the M line and within the I band, colocalizing with FBP2 on both sides of the Z line in the absence of Ca(2+).</text>
</comment>
<comment type="miscellaneous">
    <text>In vertebrates, three forms of this ubiquitous glycolytic enzyme are found, aldolase A in muscle, aldolase B in liver and aldolase C in brain.</text>
</comment>
<comment type="similarity">
    <text evidence="6">Belongs to the class I fructose-bisphosphate aldolase family.</text>
</comment>